<proteinExistence type="inferred from homology"/>
<evidence type="ECO:0000255" key="1">
    <source>
        <dbReference type="HAMAP-Rule" id="MF_00678"/>
    </source>
</evidence>
<name>Y582_RHIEC</name>
<protein>
    <recommendedName>
        <fullName evidence="1">UPF0262 protein RHE_CH00582</fullName>
    </recommendedName>
</protein>
<reference key="1">
    <citation type="journal article" date="2006" name="Proc. Natl. Acad. Sci. U.S.A.">
        <title>The partitioned Rhizobium etli genome: genetic and metabolic redundancy in seven interacting replicons.</title>
        <authorList>
            <person name="Gonzalez V."/>
            <person name="Santamaria R.I."/>
            <person name="Bustos P."/>
            <person name="Hernandez-Gonzalez I."/>
            <person name="Medrano-Soto A."/>
            <person name="Moreno-Hagelsieb G."/>
            <person name="Janga S.C."/>
            <person name="Ramirez M.A."/>
            <person name="Jimenez-Jacinto V."/>
            <person name="Collado-Vides J."/>
            <person name="Davila G."/>
        </authorList>
    </citation>
    <scope>NUCLEOTIDE SEQUENCE [LARGE SCALE GENOMIC DNA]</scope>
    <source>
        <strain>ATCC 51251 / DSM 11541 / JCM 21823 / NBRC 15573 / CFN 42</strain>
    </source>
</reference>
<accession>Q2KCN7</accession>
<keyword id="KW-1185">Reference proteome</keyword>
<comment type="similarity">
    <text evidence="1">Belongs to the UPF0262 family.</text>
</comment>
<feature type="chain" id="PRO_0000314205" description="UPF0262 protein RHE_CH00582">
    <location>
        <begin position="1"/>
        <end position="157"/>
    </location>
</feature>
<organism>
    <name type="scientific">Rhizobium etli (strain ATCC 51251 / DSM 11541 / JCM 21823 / NBRC 15573 / CFN 42)</name>
    <dbReference type="NCBI Taxonomy" id="347834"/>
    <lineage>
        <taxon>Bacteria</taxon>
        <taxon>Pseudomonadati</taxon>
        <taxon>Pseudomonadota</taxon>
        <taxon>Alphaproteobacteria</taxon>
        <taxon>Hyphomicrobiales</taxon>
        <taxon>Rhizobiaceae</taxon>
        <taxon>Rhizobium/Agrobacterium group</taxon>
        <taxon>Rhizobium</taxon>
    </lineage>
</organism>
<dbReference type="EMBL" id="CP000133">
    <property type="protein sequence ID" value="ABC89399.1"/>
    <property type="molecule type" value="Genomic_DNA"/>
</dbReference>
<dbReference type="RefSeq" id="WP_011423949.1">
    <property type="nucleotide sequence ID" value="NC_007761.1"/>
</dbReference>
<dbReference type="KEGG" id="ret:RHE_CH00582"/>
<dbReference type="eggNOG" id="COG5328">
    <property type="taxonomic scope" value="Bacteria"/>
</dbReference>
<dbReference type="HOGENOM" id="CLU_112904_0_0_5"/>
<dbReference type="OrthoDB" id="9798434at2"/>
<dbReference type="Proteomes" id="UP000001936">
    <property type="component" value="Chromosome"/>
</dbReference>
<dbReference type="HAMAP" id="MF_00678">
    <property type="entry name" value="UPF0262"/>
    <property type="match status" value="1"/>
</dbReference>
<dbReference type="InterPro" id="IPR008321">
    <property type="entry name" value="UCP032146"/>
</dbReference>
<dbReference type="NCBIfam" id="NF002769">
    <property type="entry name" value="PRK02853.1"/>
    <property type="match status" value="1"/>
</dbReference>
<dbReference type="Pfam" id="PF06793">
    <property type="entry name" value="UPF0262"/>
    <property type="match status" value="1"/>
</dbReference>
<dbReference type="PIRSF" id="PIRSF032146">
    <property type="entry name" value="UCP032146"/>
    <property type="match status" value="1"/>
</dbReference>
<sequence>MAAGDFRLCDVVLDDTIGRSTPDVEHERAVAIFDLIEENRFEPLGHSGGPYRLNISLMDSKLVFAIKTEEGGDVATHILSLTPFRRIVKDYFMICESYYEAIRSATPSRIEAIDMGRRGIHNEGSQTLKDRLAGKIEVDFDTARRLFTLVCVLYWRG</sequence>
<gene>
    <name type="ordered locus">RHE_CH00582</name>
</gene>